<comment type="function">
    <text evidence="1">Binds directly to 16S ribosomal RNA.</text>
</comment>
<comment type="similarity">
    <text evidence="1">Belongs to the bacterial ribosomal protein bS20 family.</text>
</comment>
<organism>
    <name type="scientific">Bartonella henselae (strain ATCC 49882 / DSM 28221 / CCUG 30454 / Houston 1)</name>
    <name type="common">Rochalimaea henselae</name>
    <dbReference type="NCBI Taxonomy" id="283166"/>
    <lineage>
        <taxon>Bacteria</taxon>
        <taxon>Pseudomonadati</taxon>
        <taxon>Pseudomonadota</taxon>
        <taxon>Alphaproteobacteria</taxon>
        <taxon>Hyphomicrobiales</taxon>
        <taxon>Bartonellaceae</taxon>
        <taxon>Bartonella</taxon>
    </lineage>
</organism>
<proteinExistence type="inferred from homology"/>
<keyword id="KW-0687">Ribonucleoprotein</keyword>
<keyword id="KW-0689">Ribosomal protein</keyword>
<keyword id="KW-0694">RNA-binding</keyword>
<keyword id="KW-0699">rRNA-binding</keyword>
<accession>Q6G527</accession>
<reference key="1">
    <citation type="journal article" date="2004" name="Proc. Natl. Acad. Sci. U.S.A.">
        <title>The louse-borne human pathogen Bartonella quintana is a genomic derivative of the zoonotic agent Bartonella henselae.</title>
        <authorList>
            <person name="Alsmark U.C.M."/>
            <person name="Frank A.C."/>
            <person name="Karlberg E.O."/>
            <person name="Legault B.-A."/>
            <person name="Ardell D.H."/>
            <person name="Canbaeck B."/>
            <person name="Eriksson A.-S."/>
            <person name="Naeslund A.K."/>
            <person name="Handley S.A."/>
            <person name="Huvet M."/>
            <person name="La Scola B."/>
            <person name="Holmberg M."/>
            <person name="Andersson S.G.E."/>
        </authorList>
    </citation>
    <scope>NUCLEOTIDE SEQUENCE [LARGE SCALE GENOMIC DNA]</scope>
    <source>
        <strain>ATCC 49882 / DSM 28221 / CCUG 30454 / Houston 1</strain>
    </source>
</reference>
<gene>
    <name evidence="1" type="primary">rpsT</name>
    <name type="ordered locus">BH01170</name>
</gene>
<feature type="chain" id="PRO_0000167922" description="Small ribosomal subunit protein bS20">
    <location>
        <begin position="1"/>
        <end position="88"/>
    </location>
</feature>
<sequence length="88" mass="9771">MANTPSAQKAVRKVAARTQVNRARRSRVRTFMRKFDDALAGGDRASAEVAFKNFEPEIMRAVSKGVFHKNAAARKVSRLAKRLKALSV</sequence>
<protein>
    <recommendedName>
        <fullName evidence="1">Small ribosomal subunit protein bS20</fullName>
    </recommendedName>
    <alternativeName>
        <fullName evidence="2">30S ribosomal protein S20</fullName>
    </alternativeName>
</protein>
<evidence type="ECO:0000255" key="1">
    <source>
        <dbReference type="HAMAP-Rule" id="MF_00500"/>
    </source>
</evidence>
<evidence type="ECO:0000305" key="2"/>
<dbReference type="EMBL" id="BX897699">
    <property type="protein sequence ID" value="CAF26932.1"/>
    <property type="molecule type" value="Genomic_DNA"/>
</dbReference>
<dbReference type="RefSeq" id="WP_011180074.1">
    <property type="nucleotide sequence ID" value="NZ_LRIJ02000001.1"/>
</dbReference>
<dbReference type="SMR" id="Q6G527"/>
<dbReference type="PaxDb" id="283166-BH01170"/>
<dbReference type="EnsemblBacteria" id="CAF26932">
    <property type="protein sequence ID" value="CAF26932"/>
    <property type="gene ID" value="BH01170"/>
</dbReference>
<dbReference type="GeneID" id="92986400"/>
<dbReference type="KEGG" id="bhe:BH01170"/>
<dbReference type="eggNOG" id="COG0268">
    <property type="taxonomic scope" value="Bacteria"/>
</dbReference>
<dbReference type="OrthoDB" id="9807974at2"/>
<dbReference type="Proteomes" id="UP000000421">
    <property type="component" value="Chromosome"/>
</dbReference>
<dbReference type="GO" id="GO:0015935">
    <property type="term" value="C:small ribosomal subunit"/>
    <property type="evidence" value="ECO:0007669"/>
    <property type="project" value="TreeGrafter"/>
</dbReference>
<dbReference type="GO" id="GO:0070181">
    <property type="term" value="F:small ribosomal subunit rRNA binding"/>
    <property type="evidence" value="ECO:0007669"/>
    <property type="project" value="TreeGrafter"/>
</dbReference>
<dbReference type="GO" id="GO:0003735">
    <property type="term" value="F:structural constituent of ribosome"/>
    <property type="evidence" value="ECO:0007669"/>
    <property type="project" value="InterPro"/>
</dbReference>
<dbReference type="GO" id="GO:0006412">
    <property type="term" value="P:translation"/>
    <property type="evidence" value="ECO:0007669"/>
    <property type="project" value="UniProtKB-UniRule"/>
</dbReference>
<dbReference type="FunFam" id="1.20.58.110:FF:000001">
    <property type="entry name" value="30S ribosomal protein S20"/>
    <property type="match status" value="1"/>
</dbReference>
<dbReference type="Gene3D" id="1.20.58.110">
    <property type="entry name" value="Ribosomal protein S20"/>
    <property type="match status" value="1"/>
</dbReference>
<dbReference type="HAMAP" id="MF_00500">
    <property type="entry name" value="Ribosomal_bS20"/>
    <property type="match status" value="1"/>
</dbReference>
<dbReference type="InterPro" id="IPR002583">
    <property type="entry name" value="Ribosomal_bS20"/>
</dbReference>
<dbReference type="InterPro" id="IPR036510">
    <property type="entry name" value="Ribosomal_bS20_sf"/>
</dbReference>
<dbReference type="NCBIfam" id="TIGR00029">
    <property type="entry name" value="S20"/>
    <property type="match status" value="1"/>
</dbReference>
<dbReference type="PANTHER" id="PTHR33398">
    <property type="entry name" value="30S RIBOSOMAL PROTEIN S20"/>
    <property type="match status" value="1"/>
</dbReference>
<dbReference type="PANTHER" id="PTHR33398:SF1">
    <property type="entry name" value="SMALL RIBOSOMAL SUBUNIT PROTEIN BS20C"/>
    <property type="match status" value="1"/>
</dbReference>
<dbReference type="Pfam" id="PF01649">
    <property type="entry name" value="Ribosomal_S20p"/>
    <property type="match status" value="1"/>
</dbReference>
<dbReference type="SUPFAM" id="SSF46992">
    <property type="entry name" value="Ribosomal protein S20"/>
    <property type="match status" value="1"/>
</dbReference>
<name>RS20_BARHE</name>